<reference key="1">
    <citation type="journal article" date="2010" name="ISME J.">
        <title>The complete genome sequence of the algal symbiont Dinoroseobacter shibae: a hitchhiker's guide to life in the sea.</title>
        <authorList>
            <person name="Wagner-Dobler I."/>
            <person name="Ballhausen B."/>
            <person name="Berger M."/>
            <person name="Brinkhoff T."/>
            <person name="Buchholz I."/>
            <person name="Bunk B."/>
            <person name="Cypionka H."/>
            <person name="Daniel R."/>
            <person name="Drepper T."/>
            <person name="Gerdts G."/>
            <person name="Hahnke S."/>
            <person name="Han C."/>
            <person name="Jahn D."/>
            <person name="Kalhoefer D."/>
            <person name="Kiss H."/>
            <person name="Klenk H.P."/>
            <person name="Kyrpides N."/>
            <person name="Liebl W."/>
            <person name="Liesegang H."/>
            <person name="Meincke L."/>
            <person name="Pati A."/>
            <person name="Petersen J."/>
            <person name="Piekarski T."/>
            <person name="Pommerenke C."/>
            <person name="Pradella S."/>
            <person name="Pukall R."/>
            <person name="Rabus R."/>
            <person name="Stackebrandt E."/>
            <person name="Thole S."/>
            <person name="Thompson L."/>
            <person name="Tielen P."/>
            <person name="Tomasch J."/>
            <person name="von Jan M."/>
            <person name="Wanphrut N."/>
            <person name="Wichels A."/>
            <person name="Zech H."/>
            <person name="Simon M."/>
        </authorList>
    </citation>
    <scope>NUCLEOTIDE SEQUENCE [LARGE SCALE GENOMIC DNA]</scope>
    <source>
        <strain>DSM 16493 / NCIMB 14021 / DFL 12</strain>
    </source>
</reference>
<accession>A8LI73</accession>
<feature type="chain" id="PRO_1000082550" description="Ribosomal RNA small subunit methyltransferase A">
    <location>
        <begin position="1"/>
        <end position="280"/>
    </location>
</feature>
<feature type="binding site" evidence="1">
    <location>
        <position position="28"/>
    </location>
    <ligand>
        <name>S-adenosyl-L-methionine</name>
        <dbReference type="ChEBI" id="CHEBI:59789"/>
    </ligand>
</feature>
<feature type="binding site" evidence="1">
    <location>
        <position position="30"/>
    </location>
    <ligand>
        <name>S-adenosyl-L-methionine</name>
        <dbReference type="ChEBI" id="CHEBI:59789"/>
    </ligand>
</feature>
<feature type="binding site" evidence="1">
    <location>
        <position position="55"/>
    </location>
    <ligand>
        <name>S-adenosyl-L-methionine</name>
        <dbReference type="ChEBI" id="CHEBI:59789"/>
    </ligand>
</feature>
<feature type="binding site" evidence="1">
    <location>
        <position position="77"/>
    </location>
    <ligand>
        <name>S-adenosyl-L-methionine</name>
        <dbReference type="ChEBI" id="CHEBI:59789"/>
    </ligand>
</feature>
<feature type="binding site" evidence="1">
    <location>
        <position position="103"/>
    </location>
    <ligand>
        <name>S-adenosyl-L-methionine</name>
        <dbReference type="ChEBI" id="CHEBI:59789"/>
    </ligand>
</feature>
<feature type="binding site" evidence="1">
    <location>
        <position position="122"/>
    </location>
    <ligand>
        <name>S-adenosyl-L-methionine</name>
        <dbReference type="ChEBI" id="CHEBI:59789"/>
    </ligand>
</feature>
<dbReference type="EC" id="2.1.1.182" evidence="1"/>
<dbReference type="EMBL" id="CP000830">
    <property type="protein sequence ID" value="ABV92927.1"/>
    <property type="molecule type" value="Genomic_DNA"/>
</dbReference>
<dbReference type="RefSeq" id="WP_012177857.1">
    <property type="nucleotide sequence ID" value="NC_009952.1"/>
</dbReference>
<dbReference type="SMR" id="A8LI73"/>
<dbReference type="STRING" id="398580.Dshi_1185"/>
<dbReference type="KEGG" id="dsh:Dshi_1185"/>
<dbReference type="eggNOG" id="COG0030">
    <property type="taxonomic scope" value="Bacteria"/>
</dbReference>
<dbReference type="HOGENOM" id="CLU_041220_0_1_5"/>
<dbReference type="OrthoDB" id="9814755at2"/>
<dbReference type="Proteomes" id="UP000006833">
    <property type="component" value="Chromosome"/>
</dbReference>
<dbReference type="GO" id="GO:0005829">
    <property type="term" value="C:cytosol"/>
    <property type="evidence" value="ECO:0007669"/>
    <property type="project" value="TreeGrafter"/>
</dbReference>
<dbReference type="GO" id="GO:0052908">
    <property type="term" value="F:16S rRNA (adenine(1518)-N(6)/adenine(1519)-N(6))-dimethyltransferase activity"/>
    <property type="evidence" value="ECO:0007669"/>
    <property type="project" value="UniProtKB-EC"/>
</dbReference>
<dbReference type="GO" id="GO:0003723">
    <property type="term" value="F:RNA binding"/>
    <property type="evidence" value="ECO:0007669"/>
    <property type="project" value="UniProtKB-KW"/>
</dbReference>
<dbReference type="CDD" id="cd02440">
    <property type="entry name" value="AdoMet_MTases"/>
    <property type="match status" value="1"/>
</dbReference>
<dbReference type="FunFam" id="1.10.8.100:FF:000001">
    <property type="entry name" value="Ribosomal RNA small subunit methyltransferase A"/>
    <property type="match status" value="1"/>
</dbReference>
<dbReference type="Gene3D" id="1.10.8.100">
    <property type="entry name" value="Ribosomal RNA adenine dimethylase-like, domain 2"/>
    <property type="match status" value="1"/>
</dbReference>
<dbReference type="Gene3D" id="3.40.50.150">
    <property type="entry name" value="Vaccinia Virus protein VP39"/>
    <property type="match status" value="1"/>
</dbReference>
<dbReference type="HAMAP" id="MF_00607">
    <property type="entry name" value="16SrRNA_methyltr_A"/>
    <property type="match status" value="1"/>
</dbReference>
<dbReference type="InterPro" id="IPR001737">
    <property type="entry name" value="KsgA/Erm"/>
</dbReference>
<dbReference type="InterPro" id="IPR023165">
    <property type="entry name" value="rRNA_Ade_diMease-like_C"/>
</dbReference>
<dbReference type="InterPro" id="IPR020596">
    <property type="entry name" value="rRNA_Ade_Mease_Trfase_CS"/>
</dbReference>
<dbReference type="InterPro" id="IPR020598">
    <property type="entry name" value="rRNA_Ade_methylase_Trfase_N"/>
</dbReference>
<dbReference type="InterPro" id="IPR011530">
    <property type="entry name" value="rRNA_adenine_dimethylase"/>
</dbReference>
<dbReference type="InterPro" id="IPR029063">
    <property type="entry name" value="SAM-dependent_MTases_sf"/>
</dbReference>
<dbReference type="NCBIfam" id="TIGR00755">
    <property type="entry name" value="ksgA"/>
    <property type="match status" value="1"/>
</dbReference>
<dbReference type="PANTHER" id="PTHR11727">
    <property type="entry name" value="DIMETHYLADENOSINE TRANSFERASE"/>
    <property type="match status" value="1"/>
</dbReference>
<dbReference type="PANTHER" id="PTHR11727:SF7">
    <property type="entry name" value="DIMETHYLADENOSINE TRANSFERASE-RELATED"/>
    <property type="match status" value="1"/>
</dbReference>
<dbReference type="Pfam" id="PF00398">
    <property type="entry name" value="RrnaAD"/>
    <property type="match status" value="1"/>
</dbReference>
<dbReference type="SMART" id="SM00650">
    <property type="entry name" value="rADc"/>
    <property type="match status" value="1"/>
</dbReference>
<dbReference type="SUPFAM" id="SSF53335">
    <property type="entry name" value="S-adenosyl-L-methionine-dependent methyltransferases"/>
    <property type="match status" value="1"/>
</dbReference>
<dbReference type="PROSITE" id="PS01131">
    <property type="entry name" value="RRNA_A_DIMETH"/>
    <property type="match status" value="1"/>
</dbReference>
<dbReference type="PROSITE" id="PS51689">
    <property type="entry name" value="SAM_RNA_A_N6_MT"/>
    <property type="match status" value="1"/>
</dbReference>
<proteinExistence type="inferred from homology"/>
<gene>
    <name evidence="1" type="primary">rsmA</name>
    <name evidence="1" type="synonym">ksgA</name>
    <name type="ordered locus">Dshi_1185</name>
</gene>
<sequence>MAQIDGLPPLREVIAAHKLSAKKSLGQNFLLDLNLTARIARVPGDLSGADVLEVGPGPGGLTRGLLAEGARKVLAIEKDARCLPALQQIAAAYPGRLEVIEGDALEVDATAYLSPPIHIAANLPYNVGTELLVRWLTPPDWPPFWRTLTLMFQREVAERIVAKPGSKAYGRLAILAQWRAEAEIALTLPPQAFIPAPKVHSAVVHLRARTEPRYPADAAVLSRVVATAFNQRRKMLRASLKGLTPGIEDHLAAVGIDPTRRAETLSLEEFCALARQIAAG</sequence>
<keyword id="KW-0963">Cytoplasm</keyword>
<keyword id="KW-0489">Methyltransferase</keyword>
<keyword id="KW-1185">Reference proteome</keyword>
<keyword id="KW-0694">RNA-binding</keyword>
<keyword id="KW-0698">rRNA processing</keyword>
<keyword id="KW-0949">S-adenosyl-L-methionine</keyword>
<keyword id="KW-0808">Transferase</keyword>
<organism>
    <name type="scientific">Dinoroseobacter shibae (strain DSM 16493 / NCIMB 14021 / DFL 12)</name>
    <dbReference type="NCBI Taxonomy" id="398580"/>
    <lineage>
        <taxon>Bacteria</taxon>
        <taxon>Pseudomonadati</taxon>
        <taxon>Pseudomonadota</taxon>
        <taxon>Alphaproteobacteria</taxon>
        <taxon>Rhodobacterales</taxon>
        <taxon>Roseobacteraceae</taxon>
        <taxon>Dinoroseobacter</taxon>
    </lineage>
</organism>
<name>RSMA_DINSH</name>
<comment type="function">
    <text evidence="1">Specifically dimethylates two adjacent adenosines (A1518 and A1519) in the loop of a conserved hairpin near the 3'-end of 16S rRNA in the 30S particle. May play a critical role in biogenesis of 30S subunits.</text>
</comment>
<comment type="catalytic activity">
    <reaction evidence="1">
        <text>adenosine(1518)/adenosine(1519) in 16S rRNA + 4 S-adenosyl-L-methionine = N(6)-dimethyladenosine(1518)/N(6)-dimethyladenosine(1519) in 16S rRNA + 4 S-adenosyl-L-homocysteine + 4 H(+)</text>
        <dbReference type="Rhea" id="RHEA:19609"/>
        <dbReference type="Rhea" id="RHEA-COMP:10232"/>
        <dbReference type="Rhea" id="RHEA-COMP:10233"/>
        <dbReference type="ChEBI" id="CHEBI:15378"/>
        <dbReference type="ChEBI" id="CHEBI:57856"/>
        <dbReference type="ChEBI" id="CHEBI:59789"/>
        <dbReference type="ChEBI" id="CHEBI:74411"/>
        <dbReference type="ChEBI" id="CHEBI:74493"/>
        <dbReference type="EC" id="2.1.1.182"/>
    </reaction>
</comment>
<comment type="subcellular location">
    <subcellularLocation>
        <location evidence="1">Cytoplasm</location>
    </subcellularLocation>
</comment>
<comment type="similarity">
    <text evidence="1">Belongs to the class I-like SAM-binding methyltransferase superfamily. rRNA adenine N(6)-methyltransferase family. RsmA subfamily.</text>
</comment>
<evidence type="ECO:0000255" key="1">
    <source>
        <dbReference type="HAMAP-Rule" id="MF_00607"/>
    </source>
</evidence>
<protein>
    <recommendedName>
        <fullName evidence="1">Ribosomal RNA small subunit methyltransferase A</fullName>
        <ecNumber evidence="1">2.1.1.182</ecNumber>
    </recommendedName>
    <alternativeName>
        <fullName evidence="1">16S rRNA (adenine(1518)-N(6)/adenine(1519)-N(6))-dimethyltransferase</fullName>
    </alternativeName>
    <alternativeName>
        <fullName evidence="1">16S rRNA dimethyladenosine transferase</fullName>
    </alternativeName>
    <alternativeName>
        <fullName evidence="1">16S rRNA dimethylase</fullName>
    </alternativeName>
    <alternativeName>
        <fullName evidence="1">S-adenosylmethionine-6-N', N'-adenosyl(rRNA) dimethyltransferase</fullName>
    </alternativeName>
</protein>